<feature type="chain" id="PRO_0000424826" description="Methyl-accepting chemotaxis protein McpS">
    <location>
        <begin position="1"/>
        <end position="639"/>
    </location>
</feature>
<feature type="topological domain" description="Cytoplasmic" evidence="1">
    <location>
        <begin position="1"/>
        <end position="13"/>
    </location>
</feature>
<feature type="transmembrane region" description="Helical" evidence="1">
    <location>
        <begin position="14"/>
        <end position="34"/>
    </location>
</feature>
<feature type="topological domain" description="Periplasmic" evidence="1">
    <location>
        <begin position="35"/>
        <end position="288"/>
    </location>
</feature>
<feature type="transmembrane region" description="Helical" evidence="1">
    <location>
        <begin position="289"/>
        <end position="309"/>
    </location>
</feature>
<feature type="topological domain" description="Cytoplasmic" evidence="1">
    <location>
        <begin position="310"/>
        <end position="639"/>
    </location>
</feature>
<feature type="domain" description="HBM" evidence="4">
    <location>
        <begin position="41"/>
        <end position="283"/>
    </location>
</feature>
<feature type="domain" description="HAMP" evidence="2">
    <location>
        <begin position="310"/>
        <end position="362"/>
    </location>
</feature>
<feature type="domain" description="Methyl-accepting transducer" evidence="3">
    <location>
        <begin position="367"/>
        <end position="603"/>
    </location>
</feature>
<feature type="coiled-coil region" evidence="1">
    <location>
        <begin position="191"/>
        <end position="245"/>
    </location>
</feature>
<feature type="binding site" evidence="7 10">
    <location>
        <begin position="60"/>
        <end position="65"/>
    </location>
    <ligand>
        <name>(S)-malate</name>
        <dbReference type="ChEBI" id="CHEBI:15589"/>
    </ligand>
</feature>
<feature type="binding site" evidence="7 11">
    <location>
        <begin position="60"/>
        <end position="65"/>
    </location>
    <ligand>
        <name>succinate</name>
        <dbReference type="ChEBI" id="CHEBI:30031"/>
    </ligand>
</feature>
<feature type="binding site" evidence="7 10 11">
    <location>
        <position position="138"/>
    </location>
    <ligand>
        <name>acetate</name>
        <dbReference type="ChEBI" id="CHEBI:30089"/>
    </ligand>
</feature>
<feature type="binding site" evidence="7 10 11">
    <location>
        <position position="183"/>
    </location>
    <ligand>
        <name>acetate</name>
        <dbReference type="ChEBI" id="CHEBI:30089"/>
    </ligand>
</feature>
<feature type="binding site" evidence="7 10 11">
    <location>
        <position position="187"/>
    </location>
    <ligand>
        <name>acetate</name>
        <dbReference type="ChEBI" id="CHEBI:30089"/>
    </ligand>
</feature>
<feature type="binding site" evidence="7 10 11">
    <location>
        <position position="236"/>
    </location>
    <ligand>
        <name>acetate</name>
        <dbReference type="ChEBI" id="CHEBI:30089"/>
    </ligand>
</feature>
<feature type="binding site" evidence="7 10">
    <location>
        <position position="254"/>
    </location>
    <ligand>
        <name>(S)-malate</name>
        <dbReference type="ChEBI" id="CHEBI:15589"/>
    </ligand>
</feature>
<feature type="binding site" evidence="7 11">
    <location>
        <position position="254"/>
    </location>
    <ligand>
        <name>succinate</name>
        <dbReference type="ChEBI" id="CHEBI:30031"/>
    </ligand>
</feature>
<feature type="binding site" evidence="7 10">
    <location>
        <position position="258"/>
    </location>
    <ligand>
        <name>(S)-malate</name>
        <dbReference type="ChEBI" id="CHEBI:15589"/>
    </ligand>
</feature>
<feature type="mutagenesis site" description="Abolishes binding of malate, fumarate, oxaloacetate, succinate, isocitrate and butyrate. Decreases binding of citrate." evidence="7">
    <original>R</original>
    <variation>A</variation>
    <location>
        <position position="60"/>
    </location>
</feature>
<feature type="mutagenesis site" description="Abolishes binding of malate, fumarate, oxaloacetate, succinate, isocitrate and butyrate. Decreases binding of citrate." evidence="7">
    <original>R</original>
    <variation>A</variation>
    <location>
        <position position="63"/>
    </location>
</feature>
<feature type="mutagenesis site" description="Decreases binding of acetate. Does not affect binding of malate." evidence="7">
    <original>R</original>
    <variation>A</variation>
    <location>
        <position position="183"/>
    </location>
</feature>
<feature type="mutagenesis site" description="Abolishes binding of malate, fumarate, oxaloacetate, succinate and isocitrate. Decreases binding of citrate. Does not affect binding of butyrate." evidence="7">
    <original>R</original>
    <variation>A</variation>
    <location>
        <position position="254"/>
    </location>
</feature>
<feature type="helix" evidence="12">
    <location>
        <begin position="46"/>
        <end position="68"/>
    </location>
</feature>
<feature type="turn" evidence="12">
    <location>
        <begin position="69"/>
        <end position="71"/>
    </location>
</feature>
<feature type="helix" evidence="12">
    <location>
        <begin position="73"/>
        <end position="96"/>
    </location>
</feature>
<feature type="helix" evidence="12">
    <location>
        <begin position="100"/>
        <end position="157"/>
    </location>
</feature>
<feature type="helix" evidence="12">
    <location>
        <begin position="162"/>
        <end position="191"/>
    </location>
</feature>
<feature type="helix" evidence="12">
    <location>
        <begin position="195"/>
        <end position="218"/>
    </location>
</feature>
<feature type="helix" evidence="12">
    <location>
        <begin position="220"/>
        <end position="222"/>
    </location>
</feature>
<feature type="helix" evidence="12">
    <location>
        <begin position="223"/>
        <end position="276"/>
    </location>
</feature>
<comment type="function">
    <text evidence="5 6">Chemotactic-signal transducers respond to changes in the concentration of attractants and repellents in the environment, transduce a signal from the outside to the inside of the cell, and facilitate sensory adaptation through the variation of the level of methylation. McpS is a specific chemoreceptor for 6 tricarboxylic acid (TCA) cycle intermediates (succinate, fumarate, malate, oxaloacetate, citrate and isocitrate), butyrate and acetate. Malate, succinate, fumarate and oxaloacetate cause the strongest chemotactic response.</text>
</comment>
<comment type="activity regulation">
    <text evidence="6">Binding of citrate to the ligand-binding domain reduces the chemotaxis towards the strong attractants such as malate and succinate. However, in physiologically relevant niches, citrate is mostly complexed with magnesium or calcium ions, and does not bind McpS.</text>
</comment>
<comment type="subunit">
    <text evidence="5 7">Homodimer. Exists as a mixture of monomers and dimers in solution. Ligand binding stabilizes the dimeric form.</text>
</comment>
<comment type="subcellular location">
    <subcellularLocation>
        <location evidence="9">Cell membrane</location>
        <topology evidence="9">Multi-pass membrane protein</topology>
    </subcellularLocation>
</comment>
<comment type="PTM">
    <text evidence="8">Methylated by CheR2.</text>
</comment>
<comment type="disruption phenotype">
    <text evidence="5">Mutant fails to respond to succinate but responds to toluene.</text>
</comment>
<comment type="similarity">
    <text evidence="9">Belongs to the methyl-accepting chemotaxis (MCP) protein family.</text>
</comment>
<proteinExistence type="evidence at protein level"/>
<evidence type="ECO:0000255" key="1"/>
<evidence type="ECO:0000255" key="2">
    <source>
        <dbReference type="PROSITE-ProRule" id="PRU00102"/>
    </source>
</evidence>
<evidence type="ECO:0000255" key="3">
    <source>
        <dbReference type="PROSITE-ProRule" id="PRU00284"/>
    </source>
</evidence>
<evidence type="ECO:0000255" key="4">
    <source>
        <dbReference type="PROSITE-ProRule" id="PRU01089"/>
    </source>
</evidence>
<evidence type="ECO:0000269" key="5">
    <source>
    </source>
</evidence>
<evidence type="ECO:0000269" key="6">
    <source>
    </source>
</evidence>
<evidence type="ECO:0000269" key="7">
    <source>
    </source>
</evidence>
<evidence type="ECO:0000269" key="8">
    <source>
    </source>
</evidence>
<evidence type="ECO:0000305" key="9"/>
<evidence type="ECO:0007744" key="10">
    <source>
        <dbReference type="PDB" id="2YFA"/>
    </source>
</evidence>
<evidence type="ECO:0007744" key="11">
    <source>
        <dbReference type="PDB" id="2YFB"/>
    </source>
</evidence>
<evidence type="ECO:0007829" key="12">
    <source>
        <dbReference type="PDB" id="2YFA"/>
    </source>
</evidence>
<name>MCPS_PSEPK</name>
<sequence length="639" mass="68764">MNSWFANISVNLKLGLGFGLVLVLTGLLALTGWTSLGSLIDRSNWMGDIGQLNKDLTDLRIARLQYMIANGDDTAAANTLAKLDAFSKQQAYLATTFKSPENVKLLGELGDTISAYKLSLNKMRQGYDATRAARVSMDSSAIRADQAMDALSQEVMARPEADSVRLAQYQLISKARQQLLQVRIDVRGYIAENSSANEQAALRQLDAALADTDNLKRQLPSEDARLQQFENAVLAYRDAVRQFRDAVANITTSRAEMTVQGADIVKRSDALYQIQLERRDIESTQARSLQAIATLLALLVGVLAAVLITRQITRPLQDTLVAVEKIASGDLTQHMRVTRRDELGVLQQGIARMGTTLRELISGIRDGVTQIASAAEELSAVTEQTSAGANSQKVETDQVATAMHEMAATVQEVARNAEQASHAATGADDEARAGDRVVGEAIGQIERLAEDMHRSTEAMNLLQQESQKIGSVMDVIKSVAEQTNLLALNAAIEAARAGEAGRGFAVVADEVRGLAQRTQKSTEEIEELIASLQHGTQQVANAMQGSRALTDSSVELARKAGSSLESITSTVSSIQSMNQQIAAAAEQQSAVAEEISRSILNVRDVSEQTAAASDETAASSVELARLGGQLQTLVSQFRV</sequence>
<keyword id="KW-0002">3D-structure</keyword>
<keyword id="KW-1003">Cell membrane</keyword>
<keyword id="KW-0145">Chemotaxis</keyword>
<keyword id="KW-0175">Coiled coil</keyword>
<keyword id="KW-0472">Membrane</keyword>
<keyword id="KW-0488">Methylation</keyword>
<keyword id="KW-1185">Reference proteome</keyword>
<keyword id="KW-0807">Transducer</keyword>
<keyword id="KW-0812">Transmembrane</keyword>
<keyword id="KW-1133">Transmembrane helix</keyword>
<protein>
    <recommendedName>
        <fullName>Methyl-accepting chemotaxis protein McpS</fullName>
    </recommendedName>
</protein>
<gene>
    <name type="primary">mcpS</name>
    <name type="ordered locus">PP_4658</name>
</gene>
<dbReference type="EMBL" id="AE015451">
    <property type="protein sequence ID" value="AAN70231.1"/>
    <property type="molecule type" value="Genomic_DNA"/>
</dbReference>
<dbReference type="RefSeq" id="NP_746767.1">
    <property type="nucleotide sequence ID" value="NC_002947.4"/>
</dbReference>
<dbReference type="RefSeq" id="WP_010955314.1">
    <property type="nucleotide sequence ID" value="NC_002947.4"/>
</dbReference>
<dbReference type="PDB" id="2YFA">
    <property type="method" value="X-ray"/>
    <property type="resolution" value="1.80 A"/>
    <property type="chains" value="A/B=46-283"/>
</dbReference>
<dbReference type="PDB" id="2YFB">
    <property type="method" value="X-ray"/>
    <property type="resolution" value="1.90 A"/>
    <property type="chains" value="A/B=46-283"/>
</dbReference>
<dbReference type="PDBsum" id="2YFA"/>
<dbReference type="PDBsum" id="2YFB"/>
<dbReference type="SMR" id="Q88E10"/>
<dbReference type="DIP" id="DIP-60088N"/>
<dbReference type="STRING" id="160488.PP_4658"/>
<dbReference type="PaxDb" id="160488-PP_4658"/>
<dbReference type="KEGG" id="ppu:PP_4658"/>
<dbReference type="PATRIC" id="fig|160488.4.peg.4966"/>
<dbReference type="eggNOG" id="COG0840">
    <property type="taxonomic scope" value="Bacteria"/>
</dbReference>
<dbReference type="HOGENOM" id="CLU_000445_107_27_6"/>
<dbReference type="OrthoDB" id="6434013at2"/>
<dbReference type="PhylomeDB" id="Q88E10"/>
<dbReference type="BioCyc" id="PPUT160488:G1G01-4971-MONOMER"/>
<dbReference type="EvolutionaryTrace" id="Q88E10"/>
<dbReference type="Proteomes" id="UP000000556">
    <property type="component" value="Chromosome"/>
</dbReference>
<dbReference type="GO" id="GO:0005886">
    <property type="term" value="C:plasma membrane"/>
    <property type="evidence" value="ECO:0007669"/>
    <property type="project" value="UniProtKB-SubCell"/>
</dbReference>
<dbReference type="GO" id="GO:0004888">
    <property type="term" value="F:transmembrane signaling receptor activity"/>
    <property type="evidence" value="ECO:0007669"/>
    <property type="project" value="InterPro"/>
</dbReference>
<dbReference type="GO" id="GO:0006935">
    <property type="term" value="P:chemotaxis"/>
    <property type="evidence" value="ECO:0007669"/>
    <property type="project" value="UniProtKB-KW"/>
</dbReference>
<dbReference type="GO" id="GO:0007165">
    <property type="term" value="P:signal transduction"/>
    <property type="evidence" value="ECO:0007669"/>
    <property type="project" value="UniProtKB-KW"/>
</dbReference>
<dbReference type="CDD" id="cd06225">
    <property type="entry name" value="HAMP"/>
    <property type="match status" value="1"/>
</dbReference>
<dbReference type="CDD" id="cd11386">
    <property type="entry name" value="MCP_signal"/>
    <property type="match status" value="1"/>
</dbReference>
<dbReference type="FunFam" id="1.10.287.950:FF:000001">
    <property type="entry name" value="Methyl-accepting chemotaxis sensory transducer"/>
    <property type="match status" value="1"/>
</dbReference>
<dbReference type="Gene3D" id="1.20.1440.210">
    <property type="match status" value="2"/>
</dbReference>
<dbReference type="Gene3D" id="1.10.287.950">
    <property type="entry name" value="Methyl-accepting chemotaxis protein"/>
    <property type="match status" value="1"/>
</dbReference>
<dbReference type="InterPro" id="IPR004090">
    <property type="entry name" value="Chemotax_Me-accpt_rcpt"/>
</dbReference>
<dbReference type="InterPro" id="IPR003660">
    <property type="entry name" value="HAMP_dom"/>
</dbReference>
<dbReference type="InterPro" id="IPR032255">
    <property type="entry name" value="HBM"/>
</dbReference>
<dbReference type="InterPro" id="IPR004089">
    <property type="entry name" value="MCPsignal_dom"/>
</dbReference>
<dbReference type="PANTHER" id="PTHR32089">
    <property type="entry name" value="METHYL-ACCEPTING CHEMOTAXIS PROTEIN MCPB"/>
    <property type="match status" value="1"/>
</dbReference>
<dbReference type="PANTHER" id="PTHR32089:SF120">
    <property type="entry name" value="METHYL-ACCEPTING CHEMOTAXIS PROTEIN TLPQ"/>
    <property type="match status" value="1"/>
</dbReference>
<dbReference type="Pfam" id="PF00672">
    <property type="entry name" value="HAMP"/>
    <property type="match status" value="1"/>
</dbReference>
<dbReference type="Pfam" id="PF16591">
    <property type="entry name" value="HBM"/>
    <property type="match status" value="1"/>
</dbReference>
<dbReference type="Pfam" id="PF00015">
    <property type="entry name" value="MCPsignal"/>
    <property type="match status" value="1"/>
</dbReference>
<dbReference type="PRINTS" id="PR00260">
    <property type="entry name" value="CHEMTRNSDUCR"/>
</dbReference>
<dbReference type="SMART" id="SM00304">
    <property type="entry name" value="HAMP"/>
    <property type="match status" value="2"/>
</dbReference>
<dbReference type="SMART" id="SM01358">
    <property type="entry name" value="HBM"/>
    <property type="match status" value="1"/>
</dbReference>
<dbReference type="SMART" id="SM00283">
    <property type="entry name" value="MA"/>
    <property type="match status" value="1"/>
</dbReference>
<dbReference type="SUPFAM" id="SSF58104">
    <property type="entry name" value="Methyl-accepting chemotaxis protein (MCP) signaling domain"/>
    <property type="match status" value="1"/>
</dbReference>
<dbReference type="PROSITE" id="PS50111">
    <property type="entry name" value="CHEMOTAXIS_TRANSDUC_2"/>
    <property type="match status" value="1"/>
</dbReference>
<dbReference type="PROSITE" id="PS50885">
    <property type="entry name" value="HAMP"/>
    <property type="match status" value="1"/>
</dbReference>
<dbReference type="PROSITE" id="PS51753">
    <property type="entry name" value="HBM"/>
    <property type="match status" value="1"/>
</dbReference>
<organism>
    <name type="scientific">Pseudomonas putida (strain ATCC 47054 / DSM 6125 / CFBP 8728 / NCIMB 11950 / KT2440)</name>
    <dbReference type="NCBI Taxonomy" id="160488"/>
    <lineage>
        <taxon>Bacteria</taxon>
        <taxon>Pseudomonadati</taxon>
        <taxon>Pseudomonadota</taxon>
        <taxon>Gammaproteobacteria</taxon>
        <taxon>Pseudomonadales</taxon>
        <taxon>Pseudomonadaceae</taxon>
        <taxon>Pseudomonas</taxon>
    </lineage>
</organism>
<reference key="1">
    <citation type="journal article" date="2002" name="Environ. Microbiol.">
        <title>Complete genome sequence and comparative analysis of the metabolically versatile Pseudomonas putida KT2440.</title>
        <authorList>
            <person name="Nelson K.E."/>
            <person name="Weinel C."/>
            <person name="Paulsen I.T."/>
            <person name="Dodson R.J."/>
            <person name="Hilbert H."/>
            <person name="Martins dos Santos V.A.P."/>
            <person name="Fouts D.E."/>
            <person name="Gill S.R."/>
            <person name="Pop M."/>
            <person name="Holmes M."/>
            <person name="Brinkac L.M."/>
            <person name="Beanan M.J."/>
            <person name="DeBoy R.T."/>
            <person name="Daugherty S.C."/>
            <person name="Kolonay J.F."/>
            <person name="Madupu R."/>
            <person name="Nelson W.C."/>
            <person name="White O."/>
            <person name="Peterson J.D."/>
            <person name="Khouri H.M."/>
            <person name="Hance I."/>
            <person name="Chris Lee P."/>
            <person name="Holtzapple E.K."/>
            <person name="Scanlan D."/>
            <person name="Tran K."/>
            <person name="Moazzez A."/>
            <person name="Utterback T.R."/>
            <person name="Rizzo M."/>
            <person name="Lee K."/>
            <person name="Kosack D."/>
            <person name="Moestl D."/>
            <person name="Wedler H."/>
            <person name="Lauber J."/>
            <person name="Stjepandic D."/>
            <person name="Hoheisel J."/>
            <person name="Straetz M."/>
            <person name="Heim S."/>
            <person name="Kiewitz C."/>
            <person name="Eisen J.A."/>
            <person name="Timmis K.N."/>
            <person name="Duesterhoeft A."/>
            <person name="Tuemmler B."/>
            <person name="Fraser C.M."/>
        </authorList>
    </citation>
    <scope>NUCLEOTIDE SEQUENCE [LARGE SCALE GENOMIC DNA]</scope>
    <source>
        <strain>ATCC 47054 / DSM 6125 / CFBP 8728 / NCIMB 11950 / KT2440</strain>
    </source>
</reference>
<reference key="2">
    <citation type="journal article" date="2010" name="J. Biol. Chem.">
        <title>Identification of a chemoreceptor for tricarboxylic acid cycle intermediates: differential chemotactic response towards receptor ligands.</title>
        <authorList>
            <person name="Lacal J."/>
            <person name="Alfonso C."/>
            <person name="Liu X."/>
            <person name="Parales R.E."/>
            <person name="Morel B."/>
            <person name="Conejero-Lara F."/>
            <person name="Rivas G."/>
            <person name="Duque E."/>
            <person name="Ramos J.L."/>
            <person name="Krell T."/>
        </authorList>
    </citation>
    <scope>FUNCTION</scope>
    <scope>SUBUNIT</scope>
    <scope>DISRUPTION PHENOTYPE</scope>
    <scope>GENE NAME</scope>
    <source>
        <strain>ATCC 47054 / DSM 6125 / CFBP 8728 / NCIMB 11950 / KT2440</strain>
    </source>
</reference>
<reference key="3">
    <citation type="journal article" date="2011" name="J. Mol. Recognit.">
        <title>Physiologically relevant divalent cations modulate citrate recognition by the McpS chemoreceptor.</title>
        <authorList>
            <person name="Lacal J."/>
            <person name="Garcia-Fontana C."/>
            <person name="Callejo-Garcia C."/>
            <person name="Ramos J.L."/>
            <person name="Krell T."/>
        </authorList>
    </citation>
    <scope>FUNCTION</scope>
    <scope>ACTIVITY REGULATION</scope>
    <source>
        <strain>ATCC 47054 / DSM 6125 / CFBP 8728 / NCIMB 11950 / KT2440</strain>
    </source>
</reference>
<reference key="4">
    <citation type="journal article" date="2013" name="J. Biol. Chem.">
        <title>High specificity in CheR methyltransferase function: CheR2 of Pseudomonas putida is essential for chemotaxis, whereas CheR1 is involved in biofilm formation.</title>
        <authorList>
            <person name="Garcia-Fontana C."/>
            <person name="Reyes-Darias J.A."/>
            <person name="Munoz-Martinez F."/>
            <person name="Alfonso C."/>
            <person name="Morel B."/>
            <person name="Ramos J.L."/>
            <person name="Krell T."/>
        </authorList>
    </citation>
    <scope>METHYLATION BY CHER2</scope>
    <source>
        <strain>ATCC 47054 / DSM 6125 / CFBP 8728 / NCIMB 11950 / KT2440</strain>
    </source>
</reference>
<reference key="5">
    <citation type="journal article" date="2012" name="Acta Crystallogr. F">
        <title>Crystallization and crystallographic analysis of the ligand-binding domain of the Pseudomonas putida chemoreceptor McpS in complex with malate and succinate.</title>
        <authorList>
            <person name="Gavira J.A."/>
            <person name="Lacal J."/>
            <person name="Ramos J.L."/>
            <person name="Garcia-Ruiz J.M."/>
            <person name="Krell T."/>
            <person name="Pineda-Molina E."/>
        </authorList>
    </citation>
    <scope>CRYSTALLIZATION OF 47-283</scope>
    <source>
        <strain>ATCC 47054 / DSM 6125 / CFBP 8728 / NCIMB 11950 / KT2440</strain>
    </source>
</reference>
<reference evidence="10 11" key="6">
    <citation type="journal article" date="2012" name="Proc. Natl. Acad. Sci. U.S.A.">
        <title>Evidence for chemoreceptors with bimodular ligand-binding regions harboring two signal-binding sites.</title>
        <authorList>
            <person name="Pineda-Molina E."/>
            <person name="Reyes-Darias J.A."/>
            <person name="Lacal J."/>
            <person name="Ramos J.L."/>
            <person name="Garcia-Ruiz J.M."/>
            <person name="Gavira J.A."/>
            <person name="Krell T."/>
        </authorList>
    </citation>
    <scope>X-RAY CRYSTALLOGRAPHY (1.80 ANGSTROMS) OF 46-283 IN COMPLEX WITH (S)-MALATE; SUCCINATE AND ACETATE</scope>
    <scope>SUBUNIT</scope>
    <scope>MUTAGENESIS OF ARG-60; ARG-63; ARG-183 AND ARG-254</scope>
    <source>
        <strain>ATCC 47054 / DSM 6125 / CFBP 8728 / NCIMB 11950 / KT2440</strain>
    </source>
</reference>
<accession>Q88E10</accession>